<protein>
    <recommendedName>
        <fullName>Uncharacterized 14.4 kDa protein in laf 3'region</fullName>
    </recommendedName>
</protein>
<geneLocation type="plasmid">
    <name>pTRK160</name>
</geneLocation>
<accession>P29472</accession>
<reference key="1">
    <citation type="journal article" date="1993" name="Appl. Environ. Microbiol.">
        <title>Molecular analysis of the lactacin F operon.</title>
        <authorList>
            <person name="Fremaux C."/>
            <person name="Ahn C."/>
            <person name="Klaenhammer T.R."/>
        </authorList>
    </citation>
    <scope>NUCLEOTIDE SEQUENCE [GENOMIC DNA]</scope>
    <source>
        <strain>11088</strain>
    </source>
</reference>
<sequence length="124" mass="14419">MDSLHSTMNQHVKGKHLSFEERVIIQLRLKDGYSLRAIARELNCSPSTISYEVKRGTVKLYHGKVKKYKATQGHDAYKAHRKNCGRKSDFLRKAQFMRYVHKHFFKDGWSLDVCSNRATAVGEF</sequence>
<feature type="chain" id="PRO_0000066287" description="Uncharacterized 14.4 kDa protein in laf 3'region">
    <location>
        <begin position="1"/>
        <end position="124"/>
    </location>
</feature>
<dbReference type="EMBL" id="M57961">
    <property type="protein sequence ID" value="AAA16640.1"/>
    <property type="molecule type" value="Unassigned_DNA"/>
</dbReference>
<dbReference type="GO" id="GO:0005829">
    <property type="term" value="C:cytosol"/>
    <property type="evidence" value="ECO:0007669"/>
    <property type="project" value="TreeGrafter"/>
</dbReference>
<dbReference type="GO" id="GO:0004803">
    <property type="term" value="F:transposase activity"/>
    <property type="evidence" value="ECO:0007669"/>
    <property type="project" value="TreeGrafter"/>
</dbReference>
<dbReference type="GO" id="GO:0032196">
    <property type="term" value="P:transposition"/>
    <property type="evidence" value="ECO:0007669"/>
    <property type="project" value="TreeGrafter"/>
</dbReference>
<dbReference type="Gene3D" id="1.10.10.60">
    <property type="entry name" value="Homeodomain-like"/>
    <property type="match status" value="1"/>
</dbReference>
<dbReference type="InterPro" id="IPR009057">
    <property type="entry name" value="Homeodomain-like_sf"/>
</dbReference>
<dbReference type="InterPro" id="IPR025246">
    <property type="entry name" value="IS30-like_HTH"/>
</dbReference>
<dbReference type="InterPro" id="IPR051917">
    <property type="entry name" value="Transposase-Integrase"/>
</dbReference>
<dbReference type="PANTHER" id="PTHR10948">
    <property type="entry name" value="TRANSPOSASE"/>
    <property type="match status" value="1"/>
</dbReference>
<dbReference type="PANTHER" id="PTHR10948:SF23">
    <property type="entry name" value="TRANSPOSASE INSI FOR INSERTION SEQUENCE ELEMENT IS30A-RELATED"/>
    <property type="match status" value="1"/>
</dbReference>
<dbReference type="Pfam" id="PF13936">
    <property type="entry name" value="HTH_38"/>
    <property type="match status" value="1"/>
</dbReference>
<dbReference type="SUPFAM" id="SSF46689">
    <property type="entry name" value="Homeodomain-like"/>
    <property type="match status" value="1"/>
</dbReference>
<keyword id="KW-0614">Plasmid</keyword>
<name>YLA3_LACAI</name>
<organism>
    <name type="scientific">Lactobacillus acidophilus</name>
    <dbReference type="NCBI Taxonomy" id="1579"/>
    <lineage>
        <taxon>Bacteria</taxon>
        <taxon>Bacillati</taxon>
        <taxon>Bacillota</taxon>
        <taxon>Bacilli</taxon>
        <taxon>Lactobacillales</taxon>
        <taxon>Lactobacillaceae</taxon>
        <taxon>Lactobacillus</taxon>
    </lineage>
</organism>
<proteinExistence type="predicted"/>